<feature type="chain" id="PRO_1000074097" description="Holliday junction branch migration complex subunit RuvB">
    <location>
        <begin position="1"/>
        <end position="336"/>
    </location>
</feature>
<feature type="region of interest" description="Large ATPase domain (RuvB-L)" evidence="1">
    <location>
        <begin position="4"/>
        <end position="184"/>
    </location>
</feature>
<feature type="region of interest" description="Small ATPAse domain (RuvB-S)" evidence="1">
    <location>
        <begin position="185"/>
        <end position="255"/>
    </location>
</feature>
<feature type="region of interest" description="Head domain (RuvB-H)" evidence="1">
    <location>
        <begin position="258"/>
        <end position="336"/>
    </location>
</feature>
<feature type="binding site" evidence="1">
    <location>
        <position position="23"/>
    </location>
    <ligand>
        <name>ATP</name>
        <dbReference type="ChEBI" id="CHEBI:30616"/>
    </ligand>
</feature>
<feature type="binding site" evidence="1">
    <location>
        <position position="24"/>
    </location>
    <ligand>
        <name>ATP</name>
        <dbReference type="ChEBI" id="CHEBI:30616"/>
    </ligand>
</feature>
<feature type="binding site" evidence="1">
    <location>
        <position position="65"/>
    </location>
    <ligand>
        <name>ATP</name>
        <dbReference type="ChEBI" id="CHEBI:30616"/>
    </ligand>
</feature>
<feature type="binding site" evidence="1">
    <location>
        <position position="68"/>
    </location>
    <ligand>
        <name>ATP</name>
        <dbReference type="ChEBI" id="CHEBI:30616"/>
    </ligand>
</feature>
<feature type="binding site" evidence="1">
    <location>
        <position position="69"/>
    </location>
    <ligand>
        <name>ATP</name>
        <dbReference type="ChEBI" id="CHEBI:30616"/>
    </ligand>
</feature>
<feature type="binding site" evidence="1">
    <location>
        <position position="69"/>
    </location>
    <ligand>
        <name>Mg(2+)</name>
        <dbReference type="ChEBI" id="CHEBI:18420"/>
    </ligand>
</feature>
<feature type="binding site" evidence="1">
    <location>
        <position position="70"/>
    </location>
    <ligand>
        <name>ATP</name>
        <dbReference type="ChEBI" id="CHEBI:30616"/>
    </ligand>
</feature>
<feature type="binding site" evidence="1">
    <location>
        <begin position="131"/>
        <end position="133"/>
    </location>
    <ligand>
        <name>ATP</name>
        <dbReference type="ChEBI" id="CHEBI:30616"/>
    </ligand>
</feature>
<feature type="binding site" evidence="1">
    <location>
        <position position="174"/>
    </location>
    <ligand>
        <name>ATP</name>
        <dbReference type="ChEBI" id="CHEBI:30616"/>
    </ligand>
</feature>
<feature type="binding site" evidence="1">
    <location>
        <position position="184"/>
    </location>
    <ligand>
        <name>ATP</name>
        <dbReference type="ChEBI" id="CHEBI:30616"/>
    </ligand>
</feature>
<feature type="binding site" evidence="1">
    <location>
        <position position="221"/>
    </location>
    <ligand>
        <name>ATP</name>
        <dbReference type="ChEBI" id="CHEBI:30616"/>
    </ligand>
</feature>
<feature type="binding site" evidence="1">
    <location>
        <position position="294"/>
    </location>
    <ligand>
        <name>DNA</name>
        <dbReference type="ChEBI" id="CHEBI:16991"/>
    </ligand>
</feature>
<feature type="binding site" evidence="1">
    <location>
        <position position="313"/>
    </location>
    <ligand>
        <name>DNA</name>
        <dbReference type="ChEBI" id="CHEBI:16991"/>
    </ligand>
</feature>
<feature type="binding site" evidence="1">
    <location>
        <position position="318"/>
    </location>
    <ligand>
        <name>DNA</name>
        <dbReference type="ChEBI" id="CHEBI:16991"/>
    </ligand>
</feature>
<accession>A9MND7</accession>
<proteinExistence type="inferred from homology"/>
<gene>
    <name evidence="1" type="primary">ruvB</name>
    <name type="ordered locus">SARI_01052</name>
</gene>
<organism>
    <name type="scientific">Salmonella arizonae (strain ATCC BAA-731 / CDC346-86 / RSK2980)</name>
    <dbReference type="NCBI Taxonomy" id="41514"/>
    <lineage>
        <taxon>Bacteria</taxon>
        <taxon>Pseudomonadati</taxon>
        <taxon>Pseudomonadota</taxon>
        <taxon>Gammaproteobacteria</taxon>
        <taxon>Enterobacterales</taxon>
        <taxon>Enterobacteriaceae</taxon>
        <taxon>Salmonella</taxon>
    </lineage>
</organism>
<protein>
    <recommendedName>
        <fullName evidence="1">Holliday junction branch migration complex subunit RuvB</fullName>
        <ecNumber evidence="1">3.6.4.-</ecNumber>
    </recommendedName>
</protein>
<keyword id="KW-0067">ATP-binding</keyword>
<keyword id="KW-0963">Cytoplasm</keyword>
<keyword id="KW-0227">DNA damage</keyword>
<keyword id="KW-0233">DNA recombination</keyword>
<keyword id="KW-0234">DNA repair</keyword>
<keyword id="KW-0238">DNA-binding</keyword>
<keyword id="KW-0378">Hydrolase</keyword>
<keyword id="KW-0547">Nucleotide-binding</keyword>
<keyword id="KW-1185">Reference proteome</keyword>
<dbReference type="EC" id="3.6.4.-" evidence="1"/>
<dbReference type="EMBL" id="CP000880">
    <property type="protein sequence ID" value="ABX20960.1"/>
    <property type="molecule type" value="Genomic_DNA"/>
</dbReference>
<dbReference type="SMR" id="A9MND7"/>
<dbReference type="STRING" id="41514.SARI_01052"/>
<dbReference type="KEGG" id="ses:SARI_01052"/>
<dbReference type="HOGENOM" id="CLU_055599_1_0_6"/>
<dbReference type="Proteomes" id="UP000002084">
    <property type="component" value="Chromosome"/>
</dbReference>
<dbReference type="GO" id="GO:0005737">
    <property type="term" value="C:cytoplasm"/>
    <property type="evidence" value="ECO:0007669"/>
    <property type="project" value="UniProtKB-SubCell"/>
</dbReference>
<dbReference type="GO" id="GO:0048476">
    <property type="term" value="C:Holliday junction resolvase complex"/>
    <property type="evidence" value="ECO:0007669"/>
    <property type="project" value="UniProtKB-UniRule"/>
</dbReference>
<dbReference type="GO" id="GO:0005524">
    <property type="term" value="F:ATP binding"/>
    <property type="evidence" value="ECO:0007669"/>
    <property type="project" value="UniProtKB-UniRule"/>
</dbReference>
<dbReference type="GO" id="GO:0016887">
    <property type="term" value="F:ATP hydrolysis activity"/>
    <property type="evidence" value="ECO:0007669"/>
    <property type="project" value="InterPro"/>
</dbReference>
<dbReference type="GO" id="GO:0000400">
    <property type="term" value="F:four-way junction DNA binding"/>
    <property type="evidence" value="ECO:0007669"/>
    <property type="project" value="UniProtKB-UniRule"/>
</dbReference>
<dbReference type="GO" id="GO:0009378">
    <property type="term" value="F:four-way junction helicase activity"/>
    <property type="evidence" value="ECO:0007669"/>
    <property type="project" value="InterPro"/>
</dbReference>
<dbReference type="GO" id="GO:0006310">
    <property type="term" value="P:DNA recombination"/>
    <property type="evidence" value="ECO:0007669"/>
    <property type="project" value="UniProtKB-UniRule"/>
</dbReference>
<dbReference type="GO" id="GO:0006281">
    <property type="term" value="P:DNA repair"/>
    <property type="evidence" value="ECO:0007669"/>
    <property type="project" value="UniProtKB-UniRule"/>
</dbReference>
<dbReference type="CDD" id="cd00009">
    <property type="entry name" value="AAA"/>
    <property type="match status" value="1"/>
</dbReference>
<dbReference type="FunFam" id="1.10.10.10:FF:000086">
    <property type="entry name" value="Holliday junction ATP-dependent DNA helicase RuvB"/>
    <property type="match status" value="1"/>
</dbReference>
<dbReference type="FunFam" id="1.10.8.60:FF:000023">
    <property type="entry name" value="Holliday junction ATP-dependent DNA helicase RuvB"/>
    <property type="match status" value="1"/>
</dbReference>
<dbReference type="FunFam" id="3.40.50.300:FF:000073">
    <property type="entry name" value="Holliday junction ATP-dependent DNA helicase RuvB"/>
    <property type="match status" value="1"/>
</dbReference>
<dbReference type="Gene3D" id="1.10.8.60">
    <property type="match status" value="1"/>
</dbReference>
<dbReference type="Gene3D" id="3.40.50.300">
    <property type="entry name" value="P-loop containing nucleotide triphosphate hydrolases"/>
    <property type="match status" value="1"/>
</dbReference>
<dbReference type="Gene3D" id="1.10.10.10">
    <property type="entry name" value="Winged helix-like DNA-binding domain superfamily/Winged helix DNA-binding domain"/>
    <property type="match status" value="1"/>
</dbReference>
<dbReference type="HAMAP" id="MF_00016">
    <property type="entry name" value="DNA_HJ_migration_RuvB"/>
    <property type="match status" value="1"/>
</dbReference>
<dbReference type="InterPro" id="IPR003593">
    <property type="entry name" value="AAA+_ATPase"/>
</dbReference>
<dbReference type="InterPro" id="IPR041445">
    <property type="entry name" value="AAA_lid_4"/>
</dbReference>
<dbReference type="InterPro" id="IPR004605">
    <property type="entry name" value="DNA_helicase_Holl-junc_RuvB"/>
</dbReference>
<dbReference type="InterPro" id="IPR027417">
    <property type="entry name" value="P-loop_NTPase"/>
</dbReference>
<dbReference type="InterPro" id="IPR008824">
    <property type="entry name" value="RuvB-like_N"/>
</dbReference>
<dbReference type="InterPro" id="IPR008823">
    <property type="entry name" value="RuvB_C"/>
</dbReference>
<dbReference type="InterPro" id="IPR036388">
    <property type="entry name" value="WH-like_DNA-bd_sf"/>
</dbReference>
<dbReference type="InterPro" id="IPR036390">
    <property type="entry name" value="WH_DNA-bd_sf"/>
</dbReference>
<dbReference type="NCBIfam" id="NF000868">
    <property type="entry name" value="PRK00080.1"/>
    <property type="match status" value="1"/>
</dbReference>
<dbReference type="NCBIfam" id="TIGR00635">
    <property type="entry name" value="ruvB"/>
    <property type="match status" value="1"/>
</dbReference>
<dbReference type="PANTHER" id="PTHR42848">
    <property type="match status" value="1"/>
</dbReference>
<dbReference type="PANTHER" id="PTHR42848:SF1">
    <property type="entry name" value="HOLLIDAY JUNCTION BRANCH MIGRATION COMPLEX SUBUNIT RUVB"/>
    <property type="match status" value="1"/>
</dbReference>
<dbReference type="Pfam" id="PF17864">
    <property type="entry name" value="AAA_lid_4"/>
    <property type="match status" value="1"/>
</dbReference>
<dbReference type="Pfam" id="PF05491">
    <property type="entry name" value="RuvB_C"/>
    <property type="match status" value="1"/>
</dbReference>
<dbReference type="Pfam" id="PF05496">
    <property type="entry name" value="RuvB_N"/>
    <property type="match status" value="1"/>
</dbReference>
<dbReference type="SMART" id="SM00382">
    <property type="entry name" value="AAA"/>
    <property type="match status" value="1"/>
</dbReference>
<dbReference type="SUPFAM" id="SSF52540">
    <property type="entry name" value="P-loop containing nucleoside triphosphate hydrolases"/>
    <property type="match status" value="1"/>
</dbReference>
<dbReference type="SUPFAM" id="SSF46785">
    <property type="entry name" value="Winged helix' DNA-binding domain"/>
    <property type="match status" value="1"/>
</dbReference>
<evidence type="ECO:0000255" key="1">
    <source>
        <dbReference type="HAMAP-Rule" id="MF_00016"/>
    </source>
</evidence>
<reference key="1">
    <citation type="submission" date="2007-11" db="EMBL/GenBank/DDBJ databases">
        <authorList>
            <consortium name="The Salmonella enterica serovar Arizonae Genome Sequencing Project"/>
            <person name="McClelland M."/>
            <person name="Sanderson E.K."/>
            <person name="Porwollik S."/>
            <person name="Spieth J."/>
            <person name="Clifton W.S."/>
            <person name="Fulton R."/>
            <person name="Chunyan W."/>
            <person name="Wollam A."/>
            <person name="Shah N."/>
            <person name="Pepin K."/>
            <person name="Bhonagiri V."/>
            <person name="Nash W."/>
            <person name="Johnson M."/>
            <person name="Thiruvilangam P."/>
            <person name="Wilson R."/>
        </authorList>
    </citation>
    <scope>NUCLEOTIDE SEQUENCE [LARGE SCALE GENOMIC DNA]</scope>
    <source>
        <strain>ATCC BAA-731 / CDC346-86 / RSK2980</strain>
    </source>
</reference>
<comment type="function">
    <text evidence="1">The RuvA-RuvB-RuvC complex processes Holliday junction (HJ) DNA during genetic recombination and DNA repair, while the RuvA-RuvB complex plays an important role in the rescue of blocked DNA replication forks via replication fork reversal (RFR). RuvA specifically binds to HJ cruciform DNA, conferring on it an open structure. The RuvB hexamer acts as an ATP-dependent pump, pulling dsDNA into and through the RuvAB complex. RuvB forms 2 homohexamers on either side of HJ DNA bound by 1 or 2 RuvA tetramers; 4 subunits per hexamer contact DNA at a time. Coordinated motions by a converter formed by DNA-disengaged RuvB subunits stimulates ATP hydrolysis and nucleotide exchange. Immobilization of the converter enables RuvB to convert the ATP-contained energy into a lever motion, pulling 2 nucleotides of DNA out of the RuvA tetramer per ATP hydrolyzed, thus driving DNA branch migration. The RuvB motors rotate together with the DNA substrate, which together with the progressing nucleotide cycle form the mechanistic basis for DNA recombination by continuous HJ branch migration. Branch migration allows RuvC to scan DNA until it finds its consensus sequence, where it cleaves and resolves cruciform DNA.</text>
</comment>
<comment type="catalytic activity">
    <reaction evidence="1">
        <text>ATP + H2O = ADP + phosphate + H(+)</text>
        <dbReference type="Rhea" id="RHEA:13065"/>
        <dbReference type="ChEBI" id="CHEBI:15377"/>
        <dbReference type="ChEBI" id="CHEBI:15378"/>
        <dbReference type="ChEBI" id="CHEBI:30616"/>
        <dbReference type="ChEBI" id="CHEBI:43474"/>
        <dbReference type="ChEBI" id="CHEBI:456216"/>
    </reaction>
</comment>
<comment type="subunit">
    <text evidence="1">Homohexamer. Forms an RuvA(8)-RuvB(12)-Holliday junction (HJ) complex. HJ DNA is sandwiched between 2 RuvA tetramers; dsDNA enters through RuvA and exits via RuvB. An RuvB hexamer assembles on each DNA strand where it exits the tetramer. Each RuvB hexamer is contacted by two RuvA subunits (via domain III) on 2 adjacent RuvB subunits; this complex drives branch migration. In the full resolvosome a probable DNA-RuvA(4)-RuvB(12)-RuvC(2) complex forms which resolves the HJ.</text>
</comment>
<comment type="subcellular location">
    <subcellularLocation>
        <location evidence="1">Cytoplasm</location>
    </subcellularLocation>
</comment>
<comment type="domain">
    <text evidence="1">Has 3 domains, the large (RuvB-L) and small ATPase (RuvB-S) domains and the C-terminal head (RuvB-H) domain. The head domain binds DNA, while the ATPase domains jointly bind ATP, ADP or are empty depending on the state of the subunit in the translocation cycle. During a single DNA translocation step the structure of each domain remains the same, but their relative positions change.</text>
</comment>
<comment type="similarity">
    <text evidence="1">Belongs to the RuvB family.</text>
</comment>
<name>RUVB_SALAR</name>
<sequence>MIEADRLISAGATIAEEVADRAIRPKLLAEYVGQPQVRSQMEIFIQAAKLRGDALDHLLIFGPPGLGKTTLANIVANEMGVNLRTTSGPVLEKAGDLAAMLTNLEPHDVLFIDEIHRLSPVVEEVLYPAMEDYQLDIMIGEGPAARSIKIDLPPFTLIGATTRAGSLTSPLRDRFGIVQRLEFYQVPDLQHIVGRSARHMGLEMSDDGALEVARRARGTPRIANRLLRRVRDFAEVKHDGAISAEIAAQALDMLNVDAEGFDYMDRKLLLAVIDKFFGGPVGLDNLAAAIGEERETIEDVLEPYLIQQGFLQRTPRGRMATVRAWNHFGITPPEMP</sequence>